<sequence length="511" mass="53999">MSAPAVAAGPTAAGATAARPATTRVTILTGRRMTDLVLPAAVPMETYIDDTVAVLSEVLEDTPADVLGGFDFTAQGVWAFARPGSPPLKLDQSLDDAGVVDGSLLTLVSVSRTERYRPLVEDVIDAIAVLDESPEFDRTALNRFVGAAIPLLTAPVIGMAMRAWWETGRSLWWPLAIGILGIAVLVGSFVANRFYQSGHLAECLLVTTYLLIATAAALAVPLPRGVNSLGAPQVAGAATAVLFLTLMTRGGPRKRHELASFAVITAIAVIAAAAAFGYGYQDWVPAGGIAFGLFIVTNAAKLTVAVARIALPPIPVPGETVDNEELLDPVATPEATSEETPTWQAIIASVPASAVRLTERSKLAKQLLIGYVTSGTLILAAGAIAVVVRGHFFVHSLVVAGLITTVCGFRSRLYAERWCAWALLAATVAIPTGLTAKLIIWYPHYAWLLLSVYLTVALVALVVVGSMAHVRRVSPVVKRTLELIDGAMIAAIIPMLLWITGVYDTVRNIRF</sequence>
<keyword id="KW-0002">3D-structure</keyword>
<keyword id="KW-0007">Acetylation</keyword>
<keyword id="KW-0997">Cell inner membrane</keyword>
<keyword id="KW-1003">Cell membrane</keyword>
<keyword id="KW-0472">Membrane</keyword>
<keyword id="KW-1185">Reference proteome</keyword>
<keyword id="KW-0812">Transmembrane</keyword>
<keyword id="KW-1133">Transmembrane helix</keyword>
<keyword id="KW-0813">Transport</keyword>
<reference key="1">
    <citation type="journal article" date="1998" name="Nature">
        <title>Deciphering the biology of Mycobacterium tuberculosis from the complete genome sequence.</title>
        <authorList>
            <person name="Cole S.T."/>
            <person name="Brosch R."/>
            <person name="Parkhill J."/>
            <person name="Garnier T."/>
            <person name="Churcher C.M."/>
            <person name="Harris D.E."/>
            <person name="Gordon S.V."/>
            <person name="Eiglmeier K."/>
            <person name="Gas S."/>
            <person name="Barry C.E. III"/>
            <person name="Tekaia F."/>
            <person name="Badcock K."/>
            <person name="Basham D."/>
            <person name="Brown D."/>
            <person name="Chillingworth T."/>
            <person name="Connor R."/>
            <person name="Davies R.M."/>
            <person name="Devlin K."/>
            <person name="Feltwell T."/>
            <person name="Gentles S."/>
            <person name="Hamlin N."/>
            <person name="Holroyd S."/>
            <person name="Hornsby T."/>
            <person name="Jagels K."/>
            <person name="Krogh A."/>
            <person name="McLean J."/>
            <person name="Moule S."/>
            <person name="Murphy L.D."/>
            <person name="Oliver S."/>
            <person name="Osborne J."/>
            <person name="Quail M.A."/>
            <person name="Rajandream M.A."/>
            <person name="Rogers J."/>
            <person name="Rutter S."/>
            <person name="Seeger K."/>
            <person name="Skelton S."/>
            <person name="Squares S."/>
            <person name="Squares R."/>
            <person name="Sulston J.E."/>
            <person name="Taylor K."/>
            <person name="Whitehead S."/>
            <person name="Barrell B.G."/>
        </authorList>
    </citation>
    <scope>NUCLEOTIDE SEQUENCE [LARGE SCALE GENOMIC DNA]</scope>
    <source>
        <strain>ATCC 25618 / H37Rv</strain>
    </source>
</reference>
<reference key="2">
    <citation type="journal article" date="2003" name="Proc. Natl. Acad. Sci. U.S.A.">
        <title>The primary mechanism of attenuation of bacillus Calmette-Guerin is a loss of secreted lytic function required for invasion of lung interstitial tissue.</title>
        <authorList>
            <person name="Hsu T."/>
            <person name="Hingley-Wilson S.M."/>
            <person name="Chen B."/>
            <person name="Chen M."/>
            <person name="Dai A.Z."/>
            <person name="Morin P.M."/>
            <person name="Marks C.B."/>
            <person name="Padiyar J."/>
            <person name="Goulding C."/>
            <person name="Gingery M."/>
            <person name="Eisenberg D."/>
            <person name="Russell R.G."/>
            <person name="Derrick S.C."/>
            <person name="Collins F.M."/>
            <person name="Morris S.L."/>
            <person name="King C.H."/>
            <person name="Jacobs W.R. Jr."/>
        </authorList>
    </citation>
    <scope>FUNCTION</scope>
    <scope>DISRUPTION PHENOTYPE</scope>
    <source>
        <strain>ATCC 25618 / H37Rv</strain>
    </source>
</reference>
<reference key="3">
    <citation type="journal article" date="2003" name="Proc. Natl. Acad. Sci. U.S.A.">
        <title>Acute infection and macrophage subversion by Mycobacterium tuberculosis require a specialized secretion system.</title>
        <authorList>
            <person name="Stanley S.A."/>
            <person name="Raghavan S."/>
            <person name="Hwang W.W."/>
            <person name="Cox J.S."/>
        </authorList>
    </citation>
    <scope>FUNCTION</scope>
    <scope>SUBUNIT</scope>
    <scope>DISRUPTION PHENOTYPE</scope>
    <source>
        <strain>ATCC 35801 / TMC 107 / Erdman</strain>
    </source>
</reference>
<reference key="4">
    <citation type="journal article" date="2006" name="Infect. Immun.">
        <title>Dissection of ESAT-6 system 1 of Mycobacterium tuberculosis and impact on immunogenicity and virulence.</title>
        <authorList>
            <person name="Brodin P."/>
            <person name="Majlessi L."/>
            <person name="Marsollier L."/>
            <person name="de Jonge M.I."/>
            <person name="Bottai D."/>
            <person name="Demangel C."/>
            <person name="Hinds J."/>
            <person name="Neyrolles O."/>
            <person name="Butcher P.D."/>
            <person name="Leclerc C."/>
            <person name="Cole S.T."/>
            <person name="Brosch R."/>
        </authorList>
    </citation>
    <scope>FUNCTION</scope>
    <scope>SUBUNIT</scope>
    <scope>DISRUPTION PHENOTYPE</scope>
</reference>
<reference key="5">
    <citation type="journal article" date="2009" name="PLoS Pathog.">
        <title>Systematic genetic nomenclature for type VII secretion systems.</title>
        <authorList>
            <person name="Bitter W."/>
            <person name="Houben E.N."/>
            <person name="Bottai D."/>
            <person name="Brodin P."/>
            <person name="Brown E.J."/>
            <person name="Cox J.S."/>
            <person name="Derbyshire K."/>
            <person name="Fortune S.M."/>
            <person name="Gao L.Y."/>
            <person name="Liu J."/>
            <person name="Gey van Pittius N.C."/>
            <person name="Pym A.S."/>
            <person name="Rubin E.J."/>
            <person name="Sherman D.R."/>
            <person name="Cole S.T."/>
            <person name="Brosch R."/>
        </authorList>
    </citation>
    <scope>NOMENCLATURE</scope>
    <scope>SUBUNIT</scope>
</reference>
<reference key="6">
    <citation type="journal article" date="2011" name="Mol. Cell. Proteomics">
        <title>Proteogenomic analysis of Mycobacterium tuberculosis by high resolution mass spectrometry.</title>
        <authorList>
            <person name="Kelkar D.S."/>
            <person name="Kumar D."/>
            <person name="Kumar P."/>
            <person name="Balakrishnan L."/>
            <person name="Muthusamy B."/>
            <person name="Yadav A.K."/>
            <person name="Shrivastava P."/>
            <person name="Marimuthu A."/>
            <person name="Anand S."/>
            <person name="Sundaram H."/>
            <person name="Kingsbury R."/>
            <person name="Harsha H.C."/>
            <person name="Nair B."/>
            <person name="Prasad T.S."/>
            <person name="Chauhan D.S."/>
            <person name="Katoch K."/>
            <person name="Katoch V.M."/>
            <person name="Kumar P."/>
            <person name="Chaerkady R."/>
            <person name="Ramachandran S."/>
            <person name="Dash D."/>
            <person name="Pandey A."/>
        </authorList>
    </citation>
    <scope>ACETYLATION [LARGE SCALE ANALYSIS] AT SER-2</scope>
    <scope>CLEAVAGE OF INITIATOR METHIONINE [LARGE SCALE ANALYSIS]</scope>
    <scope>IDENTIFICATION BY MASS SPECTROMETRY [LARGE SCALE ANALYSIS]</scope>
    <source>
        <strain>ATCC 25618 / H37Rv</strain>
    </source>
</reference>
<reference key="7">
    <citation type="journal article" date="2015" name="Cell Host Microbe">
        <title>Cyclic GMP-AMP synthase is an innate immune DNA sensor for Mycobacterium tuberculosis.</title>
        <authorList>
            <person name="Collins A.C."/>
            <person name="Cai H."/>
            <person name="Li T."/>
            <person name="Franco L.H."/>
            <person name="Li X.D."/>
            <person name="Nair V.R."/>
            <person name="Scharn C.R."/>
            <person name="Stamm C.E."/>
            <person name="Levine B."/>
            <person name="Chen Z.J."/>
            <person name="Shiloh M.U."/>
        </authorList>
    </citation>
    <scope>DISRUPTION PHENOTYPE</scope>
    <source>
        <strain>ATCC 35801 / TMC 107 / Erdman</strain>
    </source>
</reference>
<reference evidence="13 14" key="8">
    <citation type="journal article" date="2016" name="BMC Struct. Biol.">
        <title>Structures of EccB1 and EccD1 from the core complex of the mycobacterial ESX-1 type VII secretion system.</title>
        <authorList>
            <person name="Wagner J.M."/>
            <person name="Chan S."/>
            <person name="Evans T.J."/>
            <person name="Kahng S."/>
            <person name="Kim J."/>
            <person name="Arbing M.A."/>
            <person name="Eisenberg D."/>
            <person name="Korotkov K.V."/>
        </authorList>
    </citation>
    <scope>X-RAY CRYSTALLOGRAPHY (1.88 ANGSTROMS) OF 21-109</scope>
    <scope>SUBUNIT</scope>
    <source>
        <strain>H37Rv</strain>
    </source>
</reference>
<proteinExistence type="evidence at protein level"/>
<dbReference type="EMBL" id="AL123456">
    <property type="protein sequence ID" value="CCP46706.1"/>
    <property type="molecule type" value="Genomic_DNA"/>
</dbReference>
<dbReference type="PIR" id="C70803">
    <property type="entry name" value="C70803"/>
</dbReference>
<dbReference type="RefSeq" id="NP_218394.1">
    <property type="nucleotide sequence ID" value="NC_000962.3"/>
</dbReference>
<dbReference type="RefSeq" id="WP_003399976.1">
    <property type="nucleotide sequence ID" value="NZ_NVQJ01000086.1"/>
</dbReference>
<dbReference type="PDB" id="4KV2">
    <property type="method" value="X-ray"/>
    <property type="resolution" value="1.88 A"/>
    <property type="chains" value="A/B=21-109"/>
</dbReference>
<dbReference type="PDB" id="4KV3">
    <property type="method" value="X-ray"/>
    <property type="resolution" value="2.20 A"/>
    <property type="chains" value="A/B=21-109"/>
</dbReference>
<dbReference type="PDBsum" id="4KV2"/>
<dbReference type="PDBsum" id="4KV3"/>
<dbReference type="SMR" id="P9WNQ7"/>
<dbReference type="STRING" id="83332.Rv3877"/>
<dbReference type="iPTMnet" id="P9WNQ7"/>
<dbReference type="PaxDb" id="83332-Rv3877"/>
<dbReference type="DNASU" id="886207"/>
<dbReference type="GeneID" id="886207"/>
<dbReference type="KEGG" id="mtu:Rv3877"/>
<dbReference type="KEGG" id="mtv:RVBD_3877"/>
<dbReference type="TubercuList" id="Rv3877"/>
<dbReference type="eggNOG" id="ENOG5031ZTA">
    <property type="taxonomic scope" value="Bacteria"/>
</dbReference>
<dbReference type="InParanoid" id="P9WNQ7"/>
<dbReference type="OrthoDB" id="4529991at2"/>
<dbReference type="Proteomes" id="UP000001584">
    <property type="component" value="Chromosome"/>
</dbReference>
<dbReference type="GO" id="GO:0009274">
    <property type="term" value="C:peptidoglycan-based cell wall"/>
    <property type="evidence" value="ECO:0007005"/>
    <property type="project" value="MTBBASE"/>
</dbReference>
<dbReference type="GO" id="GO:0005886">
    <property type="term" value="C:plasma membrane"/>
    <property type="evidence" value="ECO:0007669"/>
    <property type="project" value="UniProtKB-SubCell"/>
</dbReference>
<dbReference type="GO" id="GO:0051701">
    <property type="term" value="P:biological process involved in interaction with host"/>
    <property type="evidence" value="ECO:0000315"/>
    <property type="project" value="MTBBASE"/>
</dbReference>
<dbReference type="GO" id="GO:0042783">
    <property type="term" value="P:symbiont-mediated evasion of host immune response"/>
    <property type="evidence" value="ECO:0000315"/>
    <property type="project" value="MTBBASE"/>
</dbReference>
<dbReference type="FunFam" id="3.10.20.90:FF:000403">
    <property type="entry name" value="ESX-1 secretion system protein EccD1"/>
    <property type="match status" value="1"/>
</dbReference>
<dbReference type="Gene3D" id="3.10.20.90">
    <property type="entry name" value="Phosphatidylinositol 3-kinase Catalytic Subunit, Chain A, domain 1"/>
    <property type="match status" value="1"/>
</dbReference>
<dbReference type="InterPro" id="IPR006707">
    <property type="entry name" value="T7SS_EccD"/>
</dbReference>
<dbReference type="InterPro" id="IPR024962">
    <property type="entry name" value="YukD-like"/>
</dbReference>
<dbReference type="NCBIfam" id="TIGR03920">
    <property type="entry name" value="T7SS_EccD"/>
    <property type="match status" value="1"/>
</dbReference>
<dbReference type="Pfam" id="PF08817">
    <property type="entry name" value="YukD"/>
    <property type="match status" value="1"/>
</dbReference>
<dbReference type="PIRSF" id="PIRSF017804">
    <property type="entry name" value="Secretion_EccD1"/>
    <property type="match status" value="1"/>
</dbReference>
<protein>
    <recommendedName>
        <fullName evidence="9">ESX-1 secretion system protein EccD1</fullName>
    </recommendedName>
    <alternativeName>
        <fullName evidence="8">ESX conserved component D1</fullName>
    </alternativeName>
    <alternativeName>
        <fullName evidence="7">Snm4 secretory protein</fullName>
    </alternativeName>
    <alternativeName>
        <fullName evidence="9">Type VII secretion system protein EccD1</fullName>
        <shortName evidence="9">T7SS protein EccD1</shortName>
    </alternativeName>
</protein>
<comment type="function">
    <text evidence="2 4 10">Part of the ESX-1 specialized secretion system, which delivers several virulence factors to host cells during infection, including the key virulence factors EsxA (ESAT-6) and EsxB (CFP-10).</text>
</comment>
<comment type="subunit">
    <text evidence="2 4 11 12">Possibly a homodimer (PubMed:26922638). Part of the ESX-1 / type VII secretion system (T7SS), which is composed of cytosolic and membrane components. The ESX-1 membrane complex is composed of EccB1, EccCa1, EccCb1, EccD1 and EccE1.</text>
</comment>
<comment type="subcellular location">
    <subcellularLocation>
        <location evidence="9">Cell inner membrane</location>
        <topology evidence="1">Multi-pass membrane protein</topology>
    </subcellularLocation>
</comment>
<comment type="disruption phenotype">
    <text evidence="2 3 4 5">Double espI-eccD1 mutants abolish EsxA and EsxB secretion, but not their expression (PubMed:14557547). Disruption abolishes EsxA and EsxB secretion, but not their expression (PubMed:14557536). Results in a lack of antigen specific immunogenicity and leads to attenuated virulence (PubMed:16368961). Mutants exhibit defects in bacterial growth during the acute phase of C57BL/6 mouse infection, but survive for 140 days despite a wild-type bacterial load in the lungs at 100 days post-infection, suggesting the pathway is required for virulence (PubMed:14557536). Nearly wild-type levels of IL-12 p40 (IL12B) and TNF-alpha are produced by infected murine macrophages, while the nitric oxide response is about 50% reduced (PubMed:14557536). Mouse macrophages do not induce cGAMP production, and thus do not sense bacterial DNA correctly to induce the innate immune response (PubMed:26048137).</text>
</comment>
<comment type="miscellaneous">
    <text evidence="6">The structure in 4KV3 was determined for a fusion protein with E.coli maltose-binding protein.</text>
</comment>
<comment type="similarity">
    <text evidence="9">Belongs to the EccD/Snm4 family.</text>
</comment>
<accession>P9WNQ7</accession>
<accession>L0TGV6</accession>
<accession>O69741</accession>
<accession>Q7D4P2</accession>
<gene>
    <name evidence="8" type="primary">eccD1</name>
    <name evidence="7" type="synonym">snm4</name>
    <name type="ordered locus">Rv3877</name>
</gene>
<organism>
    <name type="scientific">Mycobacterium tuberculosis (strain ATCC 25618 / H37Rv)</name>
    <dbReference type="NCBI Taxonomy" id="83332"/>
    <lineage>
        <taxon>Bacteria</taxon>
        <taxon>Bacillati</taxon>
        <taxon>Actinomycetota</taxon>
        <taxon>Actinomycetes</taxon>
        <taxon>Mycobacteriales</taxon>
        <taxon>Mycobacteriaceae</taxon>
        <taxon>Mycobacterium</taxon>
        <taxon>Mycobacterium tuberculosis complex</taxon>
    </lineage>
</organism>
<feature type="initiator methionine" description="Removed" evidence="15">
    <location>
        <position position="1"/>
    </location>
</feature>
<feature type="chain" id="PRO_0000393233" description="ESX-1 secretion system protein EccD1">
    <location>
        <begin position="2"/>
        <end position="511"/>
    </location>
</feature>
<feature type="topological domain" description="Cytoplasmic" evidence="12">
    <location>
        <begin position="2"/>
        <end position="143"/>
    </location>
</feature>
<feature type="transmembrane region" description="Helical" evidence="1">
    <location>
        <begin position="144"/>
        <end position="164"/>
    </location>
</feature>
<feature type="topological domain" description="Periplasmic" evidence="9">
    <location>
        <begin position="165"/>
        <end position="170"/>
    </location>
</feature>
<feature type="transmembrane region" description="Helical" evidence="1">
    <location>
        <begin position="171"/>
        <end position="191"/>
    </location>
</feature>
<feature type="topological domain" description="Cytoplasmic" evidence="9">
    <location>
        <begin position="192"/>
        <end position="202"/>
    </location>
</feature>
<feature type="transmembrane region" description="Helical" evidence="1">
    <location>
        <begin position="203"/>
        <end position="223"/>
    </location>
</feature>
<feature type="topological domain" description="Periplasmic" evidence="9">
    <location>
        <begin position="224"/>
        <end position="227"/>
    </location>
</feature>
<feature type="transmembrane region" description="Helical" evidence="1">
    <location>
        <begin position="228"/>
        <end position="248"/>
    </location>
</feature>
<feature type="topological domain" description="Cytoplasmic" evidence="9">
    <location>
        <begin position="249"/>
        <end position="257"/>
    </location>
</feature>
<feature type="transmembrane region" description="Helical" evidence="1">
    <location>
        <begin position="258"/>
        <end position="278"/>
    </location>
</feature>
<feature type="topological domain" description="Periplasmic" evidence="9">
    <location>
        <begin position="279"/>
        <end position="285"/>
    </location>
</feature>
<feature type="transmembrane region" description="Helical" evidence="1">
    <location>
        <begin position="286"/>
        <end position="306"/>
    </location>
</feature>
<feature type="topological domain" description="Cytoplasmic" evidence="9">
    <location>
        <begin position="307"/>
        <end position="367"/>
    </location>
</feature>
<feature type="transmembrane region" description="Helical" evidence="1">
    <location>
        <begin position="368"/>
        <end position="388"/>
    </location>
</feature>
<feature type="transmembrane region" description="Helical" evidence="1">
    <location>
        <begin position="389"/>
        <end position="409"/>
    </location>
</feature>
<feature type="topological domain" description="Cytoplasmic" evidence="9">
    <location>
        <begin position="410"/>
        <end position="420"/>
    </location>
</feature>
<feature type="transmembrane region" description="Helical" evidence="1">
    <location>
        <begin position="421"/>
        <end position="441"/>
    </location>
</feature>
<feature type="topological domain" description="Periplasmic" evidence="9">
    <location>
        <begin position="442"/>
        <end position="444"/>
    </location>
</feature>
<feature type="transmembrane region" description="Helical" evidence="1">
    <location>
        <begin position="445"/>
        <end position="465"/>
    </location>
</feature>
<feature type="topological domain" description="Cytoplasmic" evidence="9">
    <location>
        <begin position="466"/>
        <end position="482"/>
    </location>
</feature>
<feature type="transmembrane region" description="Helical" evidence="1">
    <location>
        <begin position="483"/>
        <end position="503"/>
    </location>
</feature>
<feature type="topological domain" description="Periplasmic" evidence="9">
    <location>
        <begin position="504"/>
        <end position="511"/>
    </location>
</feature>
<feature type="modified residue" description="N-acetylserine" evidence="15">
    <location>
        <position position="2"/>
    </location>
</feature>
<name>ECCD1_MYCTU</name>
<evidence type="ECO:0000255" key="1"/>
<evidence type="ECO:0000269" key="2">
    <source>
    </source>
</evidence>
<evidence type="ECO:0000269" key="3">
    <source>
    </source>
</evidence>
<evidence type="ECO:0000269" key="4">
    <source>
    </source>
</evidence>
<evidence type="ECO:0000269" key="5">
    <source>
    </source>
</evidence>
<evidence type="ECO:0000269" key="6">
    <source>
    </source>
</evidence>
<evidence type="ECO:0000303" key="7">
    <source>
    </source>
</evidence>
<evidence type="ECO:0000303" key="8">
    <source>
    </source>
</evidence>
<evidence type="ECO:0000305" key="9"/>
<evidence type="ECO:0000305" key="10">
    <source>
    </source>
</evidence>
<evidence type="ECO:0000305" key="11">
    <source>
    </source>
</evidence>
<evidence type="ECO:0000305" key="12">
    <source>
    </source>
</evidence>
<evidence type="ECO:0007744" key="13">
    <source>
        <dbReference type="PDB" id="4KV2"/>
    </source>
</evidence>
<evidence type="ECO:0007744" key="14">
    <source>
        <dbReference type="PDB" id="4KV3"/>
    </source>
</evidence>
<evidence type="ECO:0007744" key="15">
    <source>
    </source>
</evidence>